<keyword id="KW-0067">ATP-binding</keyword>
<keyword id="KW-0418">Kinase</keyword>
<keyword id="KW-0460">Magnesium</keyword>
<keyword id="KW-0479">Metal-binding</keyword>
<keyword id="KW-0547">Nucleotide-binding</keyword>
<keyword id="KW-0784">Thiamine biosynthesis</keyword>
<keyword id="KW-0808">Transferase</keyword>
<reference key="1">
    <citation type="journal article" date="2006" name="Proc. Natl. Acad. Sci. U.S.A.">
        <title>Comparative genomics of the lactic acid bacteria.</title>
        <authorList>
            <person name="Makarova K.S."/>
            <person name="Slesarev A."/>
            <person name="Wolf Y.I."/>
            <person name="Sorokin A."/>
            <person name="Mirkin B."/>
            <person name="Koonin E.V."/>
            <person name="Pavlov A."/>
            <person name="Pavlova N."/>
            <person name="Karamychev V."/>
            <person name="Polouchine N."/>
            <person name="Shakhova V."/>
            <person name="Grigoriev I."/>
            <person name="Lou Y."/>
            <person name="Rohksar D."/>
            <person name="Lucas S."/>
            <person name="Huang K."/>
            <person name="Goodstein D.M."/>
            <person name="Hawkins T."/>
            <person name="Plengvidhya V."/>
            <person name="Welker D."/>
            <person name="Hughes J."/>
            <person name="Goh Y."/>
            <person name="Benson A."/>
            <person name="Baldwin K."/>
            <person name="Lee J.-H."/>
            <person name="Diaz-Muniz I."/>
            <person name="Dosti B."/>
            <person name="Smeianov V."/>
            <person name="Wechter W."/>
            <person name="Barabote R."/>
            <person name="Lorca G."/>
            <person name="Altermann E."/>
            <person name="Barrangou R."/>
            <person name="Ganesan B."/>
            <person name="Xie Y."/>
            <person name="Rawsthorne H."/>
            <person name="Tamir D."/>
            <person name="Parker C."/>
            <person name="Breidt F."/>
            <person name="Broadbent J.R."/>
            <person name="Hutkins R."/>
            <person name="O'Sullivan D."/>
            <person name="Steele J."/>
            <person name="Unlu G."/>
            <person name="Saier M.H. Jr."/>
            <person name="Klaenhammer T."/>
            <person name="Richardson P."/>
            <person name="Kozyavkin S."/>
            <person name="Weimer B.C."/>
            <person name="Mills D.A."/>
        </authorList>
    </citation>
    <scope>NUCLEOTIDE SEQUENCE [LARGE SCALE GENOMIC DNA]</scope>
    <source>
        <strain>ATCC 25745 / CCUG 21536 / LMG 10740 / 183-1w</strain>
    </source>
</reference>
<gene>
    <name evidence="1" type="primary">thiM</name>
    <name type="ordered locus">PEPE_0558</name>
</gene>
<evidence type="ECO:0000255" key="1">
    <source>
        <dbReference type="HAMAP-Rule" id="MF_00228"/>
    </source>
</evidence>
<dbReference type="EC" id="2.7.1.50" evidence="1"/>
<dbReference type="EMBL" id="CP000422">
    <property type="protein sequence ID" value="ABJ67646.1"/>
    <property type="molecule type" value="Genomic_DNA"/>
</dbReference>
<dbReference type="RefSeq" id="WP_011673144.1">
    <property type="nucleotide sequence ID" value="NC_008525.1"/>
</dbReference>
<dbReference type="SMR" id="Q03GM6"/>
<dbReference type="STRING" id="278197.PEPE_0558"/>
<dbReference type="GeneID" id="33062581"/>
<dbReference type="KEGG" id="ppe:PEPE_0558"/>
<dbReference type="eggNOG" id="COG2145">
    <property type="taxonomic scope" value="Bacteria"/>
</dbReference>
<dbReference type="HOGENOM" id="CLU_019943_0_0_9"/>
<dbReference type="OrthoDB" id="9778146at2"/>
<dbReference type="UniPathway" id="UPA00060">
    <property type="reaction ID" value="UER00139"/>
</dbReference>
<dbReference type="Proteomes" id="UP000000773">
    <property type="component" value="Chromosome"/>
</dbReference>
<dbReference type="GO" id="GO:0005524">
    <property type="term" value="F:ATP binding"/>
    <property type="evidence" value="ECO:0007669"/>
    <property type="project" value="UniProtKB-UniRule"/>
</dbReference>
<dbReference type="GO" id="GO:0047453">
    <property type="term" value="F:ATP-dependent NAD(P)H-hydrate dehydratase activity"/>
    <property type="evidence" value="ECO:0007669"/>
    <property type="project" value="TreeGrafter"/>
</dbReference>
<dbReference type="GO" id="GO:0004417">
    <property type="term" value="F:hydroxyethylthiazole kinase activity"/>
    <property type="evidence" value="ECO:0007669"/>
    <property type="project" value="UniProtKB-UniRule"/>
</dbReference>
<dbReference type="GO" id="GO:0000287">
    <property type="term" value="F:magnesium ion binding"/>
    <property type="evidence" value="ECO:0007669"/>
    <property type="project" value="UniProtKB-UniRule"/>
</dbReference>
<dbReference type="GO" id="GO:0110051">
    <property type="term" value="P:metabolite repair"/>
    <property type="evidence" value="ECO:0007669"/>
    <property type="project" value="TreeGrafter"/>
</dbReference>
<dbReference type="GO" id="GO:0009228">
    <property type="term" value="P:thiamine biosynthetic process"/>
    <property type="evidence" value="ECO:0007669"/>
    <property type="project" value="UniProtKB-KW"/>
</dbReference>
<dbReference type="GO" id="GO:0009229">
    <property type="term" value="P:thiamine diphosphate biosynthetic process"/>
    <property type="evidence" value="ECO:0007669"/>
    <property type="project" value="UniProtKB-UniRule"/>
</dbReference>
<dbReference type="CDD" id="cd01170">
    <property type="entry name" value="THZ_kinase"/>
    <property type="match status" value="1"/>
</dbReference>
<dbReference type="Gene3D" id="3.40.1190.20">
    <property type="match status" value="1"/>
</dbReference>
<dbReference type="HAMAP" id="MF_00228">
    <property type="entry name" value="Thz_kinase"/>
    <property type="match status" value="1"/>
</dbReference>
<dbReference type="InterPro" id="IPR000417">
    <property type="entry name" value="Hyethyz_kinase"/>
</dbReference>
<dbReference type="InterPro" id="IPR029056">
    <property type="entry name" value="Ribokinase-like"/>
</dbReference>
<dbReference type="NCBIfam" id="NF006830">
    <property type="entry name" value="PRK09355.1"/>
    <property type="match status" value="1"/>
</dbReference>
<dbReference type="NCBIfam" id="TIGR00694">
    <property type="entry name" value="thiM"/>
    <property type="match status" value="1"/>
</dbReference>
<dbReference type="PANTHER" id="PTHR12592:SF0">
    <property type="entry name" value="ATP-DEPENDENT (S)-NAD(P)H-HYDRATE DEHYDRATASE"/>
    <property type="match status" value="1"/>
</dbReference>
<dbReference type="PANTHER" id="PTHR12592">
    <property type="entry name" value="ATP-DEPENDENT (S)-NAD(P)H-HYDRATE DEHYDRATASE FAMILY MEMBER"/>
    <property type="match status" value="1"/>
</dbReference>
<dbReference type="Pfam" id="PF02110">
    <property type="entry name" value="HK"/>
    <property type="match status" value="1"/>
</dbReference>
<dbReference type="PIRSF" id="PIRSF000513">
    <property type="entry name" value="Thz_kinase"/>
    <property type="match status" value="1"/>
</dbReference>
<dbReference type="PRINTS" id="PR01099">
    <property type="entry name" value="HYETHTZKNASE"/>
</dbReference>
<dbReference type="SUPFAM" id="SSF53613">
    <property type="entry name" value="Ribokinase-like"/>
    <property type="match status" value="1"/>
</dbReference>
<name>THIM_PEDPA</name>
<feature type="chain" id="PRO_1000021524" description="Hydroxyethylthiazole kinase">
    <location>
        <begin position="1"/>
        <end position="265"/>
    </location>
</feature>
<feature type="binding site" evidence="1">
    <location>
        <position position="41"/>
    </location>
    <ligand>
        <name>substrate</name>
    </ligand>
</feature>
<feature type="binding site" evidence="1">
    <location>
        <position position="117"/>
    </location>
    <ligand>
        <name>ATP</name>
        <dbReference type="ChEBI" id="CHEBI:30616"/>
    </ligand>
</feature>
<feature type="binding site" evidence="1">
    <location>
        <position position="163"/>
    </location>
    <ligand>
        <name>ATP</name>
        <dbReference type="ChEBI" id="CHEBI:30616"/>
    </ligand>
</feature>
<feature type="binding site" evidence="1">
    <location>
        <position position="190"/>
    </location>
    <ligand>
        <name>substrate</name>
    </ligand>
</feature>
<proteinExistence type="inferred from homology"/>
<organism>
    <name type="scientific">Pediococcus pentosaceus (strain ATCC 25745 / CCUG 21536 / LMG 10740 / 183-1w)</name>
    <dbReference type="NCBI Taxonomy" id="278197"/>
    <lineage>
        <taxon>Bacteria</taxon>
        <taxon>Bacillati</taxon>
        <taxon>Bacillota</taxon>
        <taxon>Bacilli</taxon>
        <taxon>Lactobacillales</taxon>
        <taxon>Lactobacillaceae</taxon>
        <taxon>Pediococcus</taxon>
    </lineage>
</organism>
<comment type="function">
    <text evidence="1">Catalyzes the phosphorylation of the hydroxyl group of 4-methyl-5-beta-hydroxyethylthiazole (THZ).</text>
</comment>
<comment type="catalytic activity">
    <reaction evidence="1">
        <text>5-(2-hydroxyethyl)-4-methylthiazole + ATP = 4-methyl-5-(2-phosphooxyethyl)-thiazole + ADP + H(+)</text>
        <dbReference type="Rhea" id="RHEA:24212"/>
        <dbReference type="ChEBI" id="CHEBI:15378"/>
        <dbReference type="ChEBI" id="CHEBI:17957"/>
        <dbReference type="ChEBI" id="CHEBI:30616"/>
        <dbReference type="ChEBI" id="CHEBI:58296"/>
        <dbReference type="ChEBI" id="CHEBI:456216"/>
        <dbReference type="EC" id="2.7.1.50"/>
    </reaction>
</comment>
<comment type="cofactor">
    <cofactor evidence="1">
        <name>Mg(2+)</name>
        <dbReference type="ChEBI" id="CHEBI:18420"/>
    </cofactor>
</comment>
<comment type="pathway">
    <text evidence="1">Cofactor biosynthesis; thiamine diphosphate biosynthesis; 4-methyl-5-(2-phosphoethyl)-thiazole from 5-(2-hydroxyethyl)-4-methylthiazole: step 1/1.</text>
</comment>
<comment type="similarity">
    <text evidence="1">Belongs to the Thz kinase family.</text>
</comment>
<sequence>MNLQDIAKIREVNPVVVNYANFVTPFLVANGLNAVGASPIMSDEVSEAEELVQLASAVVINAGASRKESWPLMNKLCEAANQYQKPLVLDPVAVGATQYRKALNLMLLEKYHFDVIRGNIGEIAVLAGIDWQTRGIDAGNGTGDMSAVVQACAQKFKNVVIASGEVDYISDGQQVITVHNNTKLLPAIVGSGDLLSSIVGAFSAVAENTLDAAVTASLVLSCAGERAAAQLDQQNRPGSFLSYLLDELANITPEQVQDLMKIGEA</sequence>
<protein>
    <recommendedName>
        <fullName evidence="1">Hydroxyethylthiazole kinase</fullName>
        <ecNumber evidence="1">2.7.1.50</ecNumber>
    </recommendedName>
    <alternativeName>
        <fullName evidence="1">4-methyl-5-beta-hydroxyethylthiazole kinase</fullName>
        <shortName evidence="1">TH kinase</shortName>
        <shortName evidence="1">Thz kinase</shortName>
    </alternativeName>
</protein>
<accession>Q03GM6</accession>